<sequence>MTKKVAIILANEFEDIEYSSPKEALENAGFNTVVIGDTANSEVFGKHGEKVTVDVGIAEAKPEDYDALLIPGGFSPDHLRGDTEGRYGTFAKYFTKNDVPTFAICHGPQILIDTDDLKGRTLTAVLNVRKDLSNAGAHVVDESVVVDNNIVTSRVPDDLDDFNREIVKQLQ</sequence>
<protein>
    <recommendedName>
        <fullName>Uncharacterized protein SAR1965</fullName>
    </recommendedName>
</protein>
<evidence type="ECO:0000255" key="1">
    <source>
        <dbReference type="PROSITE-ProRule" id="PRU00608"/>
    </source>
</evidence>
<evidence type="ECO:0000305" key="2"/>
<comment type="similarity">
    <text evidence="2">Belongs to the peptidase C56 family.</text>
</comment>
<gene>
    <name type="ordered locus">SAR1965</name>
</gene>
<dbReference type="EMBL" id="BX571856">
    <property type="protein sequence ID" value="CAG40952.1"/>
    <property type="molecule type" value="Genomic_DNA"/>
</dbReference>
<dbReference type="RefSeq" id="WP_000163281.1">
    <property type="nucleotide sequence ID" value="NC_002952.2"/>
</dbReference>
<dbReference type="SMR" id="Q6GFI2"/>
<dbReference type="MEROPS" id="C56.001"/>
<dbReference type="KEGG" id="sar:SAR1965"/>
<dbReference type="HOGENOM" id="CLU_000445_44_4_9"/>
<dbReference type="Proteomes" id="UP000000596">
    <property type="component" value="Chromosome"/>
</dbReference>
<dbReference type="CDD" id="cd03134">
    <property type="entry name" value="GATase1_PfpI_like"/>
    <property type="match status" value="1"/>
</dbReference>
<dbReference type="Gene3D" id="3.40.50.880">
    <property type="match status" value="1"/>
</dbReference>
<dbReference type="InterPro" id="IPR006286">
    <property type="entry name" value="C56_PfpI-like"/>
</dbReference>
<dbReference type="InterPro" id="IPR029062">
    <property type="entry name" value="Class_I_gatase-like"/>
</dbReference>
<dbReference type="InterPro" id="IPR002818">
    <property type="entry name" value="DJ-1/PfpI"/>
</dbReference>
<dbReference type="NCBIfam" id="TIGR01382">
    <property type="entry name" value="PfpI"/>
    <property type="match status" value="1"/>
</dbReference>
<dbReference type="PANTHER" id="PTHR42733">
    <property type="entry name" value="DJ-1 PROTEIN"/>
    <property type="match status" value="1"/>
</dbReference>
<dbReference type="PANTHER" id="PTHR42733:SF2">
    <property type="entry name" value="DJ-1_THIJ_PFPI FAMILY PROTEIN"/>
    <property type="match status" value="1"/>
</dbReference>
<dbReference type="Pfam" id="PF01965">
    <property type="entry name" value="DJ-1_PfpI"/>
    <property type="match status" value="1"/>
</dbReference>
<dbReference type="SUPFAM" id="SSF52317">
    <property type="entry name" value="Class I glutamine amidotransferase-like"/>
    <property type="match status" value="1"/>
</dbReference>
<dbReference type="PROSITE" id="PS51276">
    <property type="entry name" value="PEPTIDASE_C56_PFPI"/>
    <property type="match status" value="1"/>
</dbReference>
<feature type="chain" id="PRO_0000157837" description="Uncharacterized protein SAR1965">
    <location>
        <begin position="1"/>
        <end position="171"/>
    </location>
</feature>
<feature type="domain" description="PfpI endopeptidase" evidence="1">
    <location>
        <begin position="3"/>
        <end position="171"/>
    </location>
</feature>
<organism>
    <name type="scientific">Staphylococcus aureus (strain MRSA252)</name>
    <dbReference type="NCBI Taxonomy" id="282458"/>
    <lineage>
        <taxon>Bacteria</taxon>
        <taxon>Bacillati</taxon>
        <taxon>Bacillota</taxon>
        <taxon>Bacilli</taxon>
        <taxon>Bacillales</taxon>
        <taxon>Staphylococcaceae</taxon>
        <taxon>Staphylococcus</taxon>
    </lineage>
</organism>
<accession>Q6GFI2</accession>
<reference key="1">
    <citation type="journal article" date="2004" name="Proc. Natl. Acad. Sci. U.S.A.">
        <title>Complete genomes of two clinical Staphylococcus aureus strains: evidence for the rapid evolution of virulence and drug resistance.</title>
        <authorList>
            <person name="Holden M.T.G."/>
            <person name="Feil E.J."/>
            <person name="Lindsay J.A."/>
            <person name="Peacock S.J."/>
            <person name="Day N.P.J."/>
            <person name="Enright M.C."/>
            <person name="Foster T.J."/>
            <person name="Moore C.E."/>
            <person name="Hurst L."/>
            <person name="Atkin R."/>
            <person name="Barron A."/>
            <person name="Bason N."/>
            <person name="Bentley S.D."/>
            <person name="Chillingworth C."/>
            <person name="Chillingworth T."/>
            <person name="Churcher C."/>
            <person name="Clark L."/>
            <person name="Corton C."/>
            <person name="Cronin A."/>
            <person name="Doggett J."/>
            <person name="Dowd L."/>
            <person name="Feltwell T."/>
            <person name="Hance Z."/>
            <person name="Harris B."/>
            <person name="Hauser H."/>
            <person name="Holroyd S."/>
            <person name="Jagels K."/>
            <person name="James K.D."/>
            <person name="Lennard N."/>
            <person name="Line A."/>
            <person name="Mayes R."/>
            <person name="Moule S."/>
            <person name="Mungall K."/>
            <person name="Ormond D."/>
            <person name="Quail M.A."/>
            <person name="Rabbinowitsch E."/>
            <person name="Rutherford K.M."/>
            <person name="Sanders M."/>
            <person name="Sharp S."/>
            <person name="Simmonds M."/>
            <person name="Stevens K."/>
            <person name="Whitehead S."/>
            <person name="Barrell B.G."/>
            <person name="Spratt B.G."/>
            <person name="Parkhill J."/>
        </authorList>
    </citation>
    <scope>NUCLEOTIDE SEQUENCE [LARGE SCALE GENOMIC DNA]</scope>
    <source>
        <strain>MRSA252</strain>
    </source>
</reference>
<proteinExistence type="inferred from homology"/>
<name>Y1965_STAAR</name>